<organism>
    <name type="scientific">Bacillus licheniformis (strain ATCC 14580 / DSM 13 / JCM 2505 / CCUG 7422 / NBRC 12200 / NCIMB 9375 / NCTC 10341 / NRRL NRS-1264 / Gibson 46)</name>
    <dbReference type="NCBI Taxonomy" id="279010"/>
    <lineage>
        <taxon>Bacteria</taxon>
        <taxon>Bacillati</taxon>
        <taxon>Bacillota</taxon>
        <taxon>Bacilli</taxon>
        <taxon>Bacillales</taxon>
        <taxon>Bacillaceae</taxon>
        <taxon>Bacillus</taxon>
    </lineage>
</organism>
<evidence type="ECO:0000255" key="1">
    <source>
        <dbReference type="HAMAP-Rule" id="MF_00636"/>
    </source>
</evidence>
<name>Y3725_BACLD</name>
<protein>
    <recommendedName>
        <fullName evidence="1">Nucleotide-binding protein BLi03725/BL03417</fullName>
    </recommendedName>
</protein>
<accession>Q65EH0</accession>
<accession>Q62PY7</accession>
<dbReference type="EMBL" id="AE017333">
    <property type="protein sequence ID" value="AAU42544.1"/>
    <property type="molecule type" value="Genomic_DNA"/>
</dbReference>
<dbReference type="EMBL" id="CP000002">
    <property type="protein sequence ID" value="AAU25174.1"/>
    <property type="molecule type" value="Genomic_DNA"/>
</dbReference>
<dbReference type="SMR" id="Q65EH0"/>
<dbReference type="STRING" id="279010.BL03417"/>
<dbReference type="KEGG" id="bld:BLi03725"/>
<dbReference type="KEGG" id="bli:BL03417"/>
<dbReference type="eggNOG" id="COG1660">
    <property type="taxonomic scope" value="Bacteria"/>
</dbReference>
<dbReference type="HOGENOM" id="CLU_059558_0_0_9"/>
<dbReference type="Proteomes" id="UP000000606">
    <property type="component" value="Chromosome"/>
</dbReference>
<dbReference type="GO" id="GO:0005524">
    <property type="term" value="F:ATP binding"/>
    <property type="evidence" value="ECO:0007669"/>
    <property type="project" value="UniProtKB-UniRule"/>
</dbReference>
<dbReference type="GO" id="GO:0005525">
    <property type="term" value="F:GTP binding"/>
    <property type="evidence" value="ECO:0007669"/>
    <property type="project" value="UniProtKB-UniRule"/>
</dbReference>
<dbReference type="Gene3D" id="3.40.50.300">
    <property type="entry name" value="P-loop containing nucleotide triphosphate hydrolases"/>
    <property type="match status" value="1"/>
</dbReference>
<dbReference type="HAMAP" id="MF_00636">
    <property type="entry name" value="RapZ_like"/>
    <property type="match status" value="1"/>
</dbReference>
<dbReference type="InterPro" id="IPR027417">
    <property type="entry name" value="P-loop_NTPase"/>
</dbReference>
<dbReference type="InterPro" id="IPR005337">
    <property type="entry name" value="RapZ-like"/>
</dbReference>
<dbReference type="InterPro" id="IPR053930">
    <property type="entry name" value="RapZ-like_N"/>
</dbReference>
<dbReference type="InterPro" id="IPR053931">
    <property type="entry name" value="RapZ_C"/>
</dbReference>
<dbReference type="NCBIfam" id="NF003828">
    <property type="entry name" value="PRK05416.1"/>
    <property type="match status" value="1"/>
</dbReference>
<dbReference type="PANTHER" id="PTHR30448">
    <property type="entry name" value="RNASE ADAPTER PROTEIN RAPZ"/>
    <property type="match status" value="1"/>
</dbReference>
<dbReference type="PANTHER" id="PTHR30448:SF0">
    <property type="entry name" value="RNASE ADAPTER PROTEIN RAPZ"/>
    <property type="match status" value="1"/>
</dbReference>
<dbReference type="Pfam" id="PF22740">
    <property type="entry name" value="PapZ_C"/>
    <property type="match status" value="1"/>
</dbReference>
<dbReference type="Pfam" id="PF03668">
    <property type="entry name" value="RapZ-like_N"/>
    <property type="match status" value="1"/>
</dbReference>
<dbReference type="PIRSF" id="PIRSF005052">
    <property type="entry name" value="P-loopkin"/>
    <property type="match status" value="1"/>
</dbReference>
<dbReference type="SUPFAM" id="SSF52540">
    <property type="entry name" value="P-loop containing nucleoside triphosphate hydrolases"/>
    <property type="match status" value="1"/>
</dbReference>
<feature type="chain" id="PRO_0000107687" description="Nucleotide-binding protein BLi03725/BL03417">
    <location>
        <begin position="1"/>
        <end position="295"/>
    </location>
</feature>
<feature type="binding site" evidence="1">
    <location>
        <begin position="16"/>
        <end position="23"/>
    </location>
    <ligand>
        <name>ATP</name>
        <dbReference type="ChEBI" id="CHEBI:30616"/>
    </ligand>
</feature>
<feature type="binding site" evidence="1">
    <location>
        <begin position="67"/>
        <end position="70"/>
    </location>
    <ligand>
        <name>GTP</name>
        <dbReference type="ChEBI" id="CHEBI:37565"/>
    </ligand>
</feature>
<comment type="function">
    <text evidence="1">Displays ATPase and GTPase activities.</text>
</comment>
<comment type="similarity">
    <text evidence="1">Belongs to the RapZ-like family.</text>
</comment>
<proteinExistence type="inferred from homology"/>
<keyword id="KW-0067">ATP-binding</keyword>
<keyword id="KW-0342">GTP-binding</keyword>
<keyword id="KW-0547">Nucleotide-binding</keyword>
<keyword id="KW-1185">Reference proteome</keyword>
<gene>
    <name type="ordered locus">BLi03725</name>
    <name type="ordered locus">BL03417</name>
</gene>
<sequence length="295" mass="33637">MNANGGHDIQLVIITGMSGAGKTVAIQSFEDLGFFCVDNLPPSLLPKFLELMKESSSKMSKVALVMDLRGREFFDSLIEALDEIGETSWITPRILFLDAKDSVLVSRYKETRRSHPLATTGLPLEGIQTERELLEELKGRSQIIYDTSDMKPKDLREKIVQHFAADHGHTFTVNVMSFGFKYGLPIDADLVFDVRFLPNPYYIDSMRPLTGKDQEVSSYVMKWNETQKFLEKLTELLSFMLPSYKREGKSQLVIAIGCTGGQHRSVTLAEYLADYFKKDYYTHVTHRDIEKKSRK</sequence>
<reference key="1">
    <citation type="journal article" date="2004" name="J. Mol. Microbiol. Biotechnol.">
        <title>The complete genome sequence of Bacillus licheniformis DSM13, an organism with great industrial potential.</title>
        <authorList>
            <person name="Veith B."/>
            <person name="Herzberg C."/>
            <person name="Steckel S."/>
            <person name="Feesche J."/>
            <person name="Maurer K.H."/>
            <person name="Ehrenreich P."/>
            <person name="Baeumer S."/>
            <person name="Henne A."/>
            <person name="Liesegang H."/>
            <person name="Merkl R."/>
            <person name="Ehrenreich A."/>
            <person name="Gottschalk G."/>
        </authorList>
    </citation>
    <scope>NUCLEOTIDE SEQUENCE [LARGE SCALE GENOMIC DNA]</scope>
    <source>
        <strain>ATCC 14580 / DSM 13 / JCM 2505 / CCUG 7422 / NBRC 12200 / NCIMB 9375 / NCTC 10341 / NRRL NRS-1264 / Gibson 46</strain>
    </source>
</reference>
<reference key="2">
    <citation type="journal article" date="2004" name="Genome Biol.">
        <title>Complete genome sequence of the industrial bacterium Bacillus licheniformis and comparisons with closely related Bacillus species.</title>
        <authorList>
            <person name="Rey M.W."/>
            <person name="Ramaiya P."/>
            <person name="Nelson B.A."/>
            <person name="Brody-Karpin S.D."/>
            <person name="Zaretsky E.J."/>
            <person name="Tang M."/>
            <person name="Lopez de Leon A."/>
            <person name="Xiang H."/>
            <person name="Gusti V."/>
            <person name="Clausen I.G."/>
            <person name="Olsen P.B."/>
            <person name="Rasmussen M.D."/>
            <person name="Andersen J.T."/>
            <person name="Joergensen P.L."/>
            <person name="Larsen T.S."/>
            <person name="Sorokin A."/>
            <person name="Bolotin A."/>
            <person name="Lapidus A."/>
            <person name="Galleron N."/>
            <person name="Ehrlich S.D."/>
            <person name="Berka R.M."/>
        </authorList>
    </citation>
    <scope>NUCLEOTIDE SEQUENCE [LARGE SCALE GENOMIC DNA]</scope>
    <source>
        <strain>ATCC 14580 / DSM 13 / JCM 2505 / CCUG 7422 / NBRC 12200 / NCIMB 9375 / NCTC 10341 / NRRL NRS-1264 / Gibson 46</strain>
    </source>
</reference>